<protein>
    <recommendedName>
        <fullName evidence="1">DNA ligase</fullName>
        <ecNumber evidence="1">6.5.1.2</ecNumber>
    </recommendedName>
    <alternativeName>
        <fullName evidence="1">Polydeoxyribonucleotide synthase [NAD(+)]</fullName>
    </alternativeName>
</protein>
<reference key="1">
    <citation type="submission" date="2007-07" db="EMBL/GenBank/DDBJ databases">
        <title>Complete sequence of Fervidobacterium nodosum Rt17-B1.</title>
        <authorList>
            <consortium name="US DOE Joint Genome Institute"/>
            <person name="Copeland A."/>
            <person name="Lucas S."/>
            <person name="Lapidus A."/>
            <person name="Barry K."/>
            <person name="Glavina del Rio T."/>
            <person name="Dalin E."/>
            <person name="Tice H."/>
            <person name="Pitluck S."/>
            <person name="Saunders E."/>
            <person name="Brettin T."/>
            <person name="Bruce D."/>
            <person name="Detter J.C."/>
            <person name="Han C."/>
            <person name="Schmutz J."/>
            <person name="Larimer F."/>
            <person name="Land M."/>
            <person name="Hauser L."/>
            <person name="Kyrpides N."/>
            <person name="Mikhailova N."/>
            <person name="Nelson K."/>
            <person name="Gogarten J.P."/>
            <person name="Noll K."/>
            <person name="Richardson P."/>
        </authorList>
    </citation>
    <scope>NUCLEOTIDE SEQUENCE [LARGE SCALE GENOMIC DNA]</scope>
    <source>
        <strain>ATCC 35602 / DSM 5306 / Rt17-B1</strain>
    </source>
</reference>
<organism>
    <name type="scientific">Fervidobacterium nodosum (strain ATCC 35602 / DSM 5306 / Rt17-B1)</name>
    <dbReference type="NCBI Taxonomy" id="381764"/>
    <lineage>
        <taxon>Bacteria</taxon>
        <taxon>Thermotogati</taxon>
        <taxon>Thermotogota</taxon>
        <taxon>Thermotogae</taxon>
        <taxon>Thermotogales</taxon>
        <taxon>Fervidobacteriaceae</taxon>
        <taxon>Fervidobacterium</taxon>
    </lineage>
</organism>
<gene>
    <name evidence="1" type="primary">ligA</name>
    <name type="ordered locus">Fnod_0182</name>
</gene>
<comment type="function">
    <text evidence="1">DNA ligase that catalyzes the formation of phosphodiester linkages between 5'-phosphoryl and 3'-hydroxyl groups in double-stranded DNA using NAD as a coenzyme and as the energy source for the reaction. It is essential for DNA replication and repair of damaged DNA.</text>
</comment>
<comment type="catalytic activity">
    <reaction evidence="1">
        <text>NAD(+) + (deoxyribonucleotide)n-3'-hydroxyl + 5'-phospho-(deoxyribonucleotide)m = (deoxyribonucleotide)n+m + AMP + beta-nicotinamide D-nucleotide.</text>
        <dbReference type="EC" id="6.5.1.2"/>
    </reaction>
</comment>
<comment type="cofactor">
    <cofactor evidence="1">
        <name>Mg(2+)</name>
        <dbReference type="ChEBI" id="CHEBI:18420"/>
    </cofactor>
    <cofactor evidence="1">
        <name>Mn(2+)</name>
        <dbReference type="ChEBI" id="CHEBI:29035"/>
    </cofactor>
</comment>
<comment type="similarity">
    <text evidence="1">Belongs to the NAD-dependent DNA ligase family. LigA subfamily.</text>
</comment>
<keyword id="KW-0227">DNA damage</keyword>
<keyword id="KW-0234">DNA repair</keyword>
<keyword id="KW-0235">DNA replication</keyword>
<keyword id="KW-0436">Ligase</keyword>
<keyword id="KW-0460">Magnesium</keyword>
<keyword id="KW-0464">Manganese</keyword>
<keyword id="KW-0479">Metal-binding</keyword>
<keyword id="KW-0520">NAD</keyword>
<keyword id="KW-1185">Reference proteome</keyword>
<keyword id="KW-0862">Zinc</keyword>
<proteinExistence type="inferred from homology"/>
<accession>A7HJG6</accession>
<evidence type="ECO:0000255" key="1">
    <source>
        <dbReference type="HAMAP-Rule" id="MF_01588"/>
    </source>
</evidence>
<feature type="chain" id="PRO_0000340350" description="DNA ligase">
    <location>
        <begin position="1"/>
        <end position="681"/>
    </location>
</feature>
<feature type="domain" description="BRCT" evidence="1">
    <location>
        <begin position="584"/>
        <end position="673"/>
    </location>
</feature>
<feature type="active site" description="N6-AMP-lysine intermediate" evidence="1">
    <location>
        <position position="114"/>
    </location>
</feature>
<feature type="binding site" evidence="1">
    <location>
        <begin position="34"/>
        <end position="38"/>
    </location>
    <ligand>
        <name>NAD(+)</name>
        <dbReference type="ChEBI" id="CHEBI:57540"/>
    </ligand>
</feature>
<feature type="binding site" evidence="1">
    <location>
        <begin position="83"/>
        <end position="84"/>
    </location>
    <ligand>
        <name>NAD(+)</name>
        <dbReference type="ChEBI" id="CHEBI:57540"/>
    </ligand>
</feature>
<feature type="binding site" evidence="1">
    <location>
        <position position="112"/>
    </location>
    <ligand>
        <name>NAD(+)</name>
        <dbReference type="ChEBI" id="CHEBI:57540"/>
    </ligand>
</feature>
<feature type="binding site" evidence="1">
    <location>
        <position position="135"/>
    </location>
    <ligand>
        <name>NAD(+)</name>
        <dbReference type="ChEBI" id="CHEBI:57540"/>
    </ligand>
</feature>
<feature type="binding site" evidence="1">
    <location>
        <position position="169"/>
    </location>
    <ligand>
        <name>NAD(+)</name>
        <dbReference type="ChEBI" id="CHEBI:57540"/>
    </ligand>
</feature>
<feature type="binding site" evidence="1">
    <location>
        <position position="285"/>
    </location>
    <ligand>
        <name>NAD(+)</name>
        <dbReference type="ChEBI" id="CHEBI:57540"/>
    </ligand>
</feature>
<feature type="binding site" evidence="1">
    <location>
        <position position="309"/>
    </location>
    <ligand>
        <name>NAD(+)</name>
        <dbReference type="ChEBI" id="CHEBI:57540"/>
    </ligand>
</feature>
<feature type="binding site" evidence="1">
    <location>
        <position position="403"/>
    </location>
    <ligand>
        <name>Zn(2+)</name>
        <dbReference type="ChEBI" id="CHEBI:29105"/>
    </ligand>
</feature>
<feature type="binding site" evidence="1">
    <location>
        <position position="406"/>
    </location>
    <ligand>
        <name>Zn(2+)</name>
        <dbReference type="ChEBI" id="CHEBI:29105"/>
    </ligand>
</feature>
<feature type="binding site" evidence="1">
    <location>
        <position position="422"/>
    </location>
    <ligand>
        <name>Zn(2+)</name>
        <dbReference type="ChEBI" id="CHEBI:29105"/>
    </ligand>
</feature>
<feature type="binding site" evidence="1">
    <location>
        <position position="427"/>
    </location>
    <ligand>
        <name>Zn(2+)</name>
        <dbReference type="ChEBI" id="CHEBI:29105"/>
    </ligand>
</feature>
<dbReference type="EC" id="6.5.1.2" evidence="1"/>
<dbReference type="EMBL" id="CP000771">
    <property type="protein sequence ID" value="ABS60049.1"/>
    <property type="molecule type" value="Genomic_DNA"/>
</dbReference>
<dbReference type="RefSeq" id="WP_011993372.1">
    <property type="nucleotide sequence ID" value="NC_009718.1"/>
</dbReference>
<dbReference type="SMR" id="A7HJG6"/>
<dbReference type="STRING" id="381764.Fnod_0182"/>
<dbReference type="KEGG" id="fno:Fnod_0182"/>
<dbReference type="eggNOG" id="COG0272">
    <property type="taxonomic scope" value="Bacteria"/>
</dbReference>
<dbReference type="HOGENOM" id="CLU_007764_2_1_0"/>
<dbReference type="OrthoDB" id="9759736at2"/>
<dbReference type="Proteomes" id="UP000002415">
    <property type="component" value="Chromosome"/>
</dbReference>
<dbReference type="GO" id="GO:0005829">
    <property type="term" value="C:cytosol"/>
    <property type="evidence" value="ECO:0007669"/>
    <property type="project" value="TreeGrafter"/>
</dbReference>
<dbReference type="GO" id="GO:0003677">
    <property type="term" value="F:DNA binding"/>
    <property type="evidence" value="ECO:0007669"/>
    <property type="project" value="InterPro"/>
</dbReference>
<dbReference type="GO" id="GO:0003911">
    <property type="term" value="F:DNA ligase (NAD+) activity"/>
    <property type="evidence" value="ECO:0007669"/>
    <property type="project" value="UniProtKB-UniRule"/>
</dbReference>
<dbReference type="GO" id="GO:0046872">
    <property type="term" value="F:metal ion binding"/>
    <property type="evidence" value="ECO:0007669"/>
    <property type="project" value="UniProtKB-KW"/>
</dbReference>
<dbReference type="GO" id="GO:0006281">
    <property type="term" value="P:DNA repair"/>
    <property type="evidence" value="ECO:0007669"/>
    <property type="project" value="UniProtKB-KW"/>
</dbReference>
<dbReference type="GO" id="GO:0006260">
    <property type="term" value="P:DNA replication"/>
    <property type="evidence" value="ECO:0007669"/>
    <property type="project" value="UniProtKB-KW"/>
</dbReference>
<dbReference type="CDD" id="cd17748">
    <property type="entry name" value="BRCT_DNA_ligase_like"/>
    <property type="match status" value="1"/>
</dbReference>
<dbReference type="CDD" id="cd00114">
    <property type="entry name" value="LIGANc"/>
    <property type="match status" value="1"/>
</dbReference>
<dbReference type="FunFam" id="1.10.150.20:FF:000006">
    <property type="entry name" value="DNA ligase"/>
    <property type="match status" value="1"/>
</dbReference>
<dbReference type="FunFam" id="1.10.150.20:FF:000007">
    <property type="entry name" value="DNA ligase"/>
    <property type="match status" value="1"/>
</dbReference>
<dbReference type="FunFam" id="1.10.287.610:FF:000002">
    <property type="entry name" value="DNA ligase"/>
    <property type="match status" value="1"/>
</dbReference>
<dbReference type="FunFam" id="2.40.50.140:FF:000012">
    <property type="entry name" value="DNA ligase"/>
    <property type="match status" value="1"/>
</dbReference>
<dbReference type="FunFam" id="3.30.470.30:FF:000001">
    <property type="entry name" value="DNA ligase"/>
    <property type="match status" value="1"/>
</dbReference>
<dbReference type="Gene3D" id="6.20.10.30">
    <property type="match status" value="1"/>
</dbReference>
<dbReference type="Gene3D" id="1.10.150.20">
    <property type="entry name" value="5' to 3' exonuclease, C-terminal subdomain"/>
    <property type="match status" value="2"/>
</dbReference>
<dbReference type="Gene3D" id="3.40.50.10190">
    <property type="entry name" value="BRCT domain"/>
    <property type="match status" value="1"/>
</dbReference>
<dbReference type="Gene3D" id="3.30.470.30">
    <property type="entry name" value="DNA ligase/mRNA capping enzyme"/>
    <property type="match status" value="1"/>
</dbReference>
<dbReference type="Gene3D" id="1.10.287.610">
    <property type="entry name" value="Helix hairpin bin"/>
    <property type="match status" value="1"/>
</dbReference>
<dbReference type="Gene3D" id="2.40.50.140">
    <property type="entry name" value="Nucleic acid-binding proteins"/>
    <property type="match status" value="1"/>
</dbReference>
<dbReference type="HAMAP" id="MF_01588">
    <property type="entry name" value="DNA_ligase_A"/>
    <property type="match status" value="1"/>
</dbReference>
<dbReference type="InterPro" id="IPR001357">
    <property type="entry name" value="BRCT_dom"/>
</dbReference>
<dbReference type="InterPro" id="IPR036420">
    <property type="entry name" value="BRCT_dom_sf"/>
</dbReference>
<dbReference type="InterPro" id="IPR041663">
    <property type="entry name" value="DisA/LigA_HHH"/>
</dbReference>
<dbReference type="InterPro" id="IPR001679">
    <property type="entry name" value="DNA_ligase"/>
</dbReference>
<dbReference type="InterPro" id="IPR018239">
    <property type="entry name" value="DNA_ligase_AS"/>
</dbReference>
<dbReference type="InterPro" id="IPR033136">
    <property type="entry name" value="DNA_ligase_CS"/>
</dbReference>
<dbReference type="InterPro" id="IPR013839">
    <property type="entry name" value="DNAligase_adenylation"/>
</dbReference>
<dbReference type="InterPro" id="IPR013840">
    <property type="entry name" value="DNAligase_N"/>
</dbReference>
<dbReference type="InterPro" id="IPR003583">
    <property type="entry name" value="Hlx-hairpin-Hlx_DNA-bd_motif"/>
</dbReference>
<dbReference type="InterPro" id="IPR012340">
    <property type="entry name" value="NA-bd_OB-fold"/>
</dbReference>
<dbReference type="InterPro" id="IPR004150">
    <property type="entry name" value="NAD_DNA_ligase_OB"/>
</dbReference>
<dbReference type="InterPro" id="IPR010994">
    <property type="entry name" value="RuvA_2-like"/>
</dbReference>
<dbReference type="InterPro" id="IPR004149">
    <property type="entry name" value="Znf_DNAligase_C4"/>
</dbReference>
<dbReference type="NCBIfam" id="TIGR00575">
    <property type="entry name" value="dnlj"/>
    <property type="match status" value="1"/>
</dbReference>
<dbReference type="NCBIfam" id="NF005932">
    <property type="entry name" value="PRK07956.1"/>
    <property type="match status" value="1"/>
</dbReference>
<dbReference type="PANTHER" id="PTHR23389">
    <property type="entry name" value="CHROMOSOME TRANSMISSION FIDELITY FACTOR 18"/>
    <property type="match status" value="1"/>
</dbReference>
<dbReference type="PANTHER" id="PTHR23389:SF9">
    <property type="entry name" value="DNA LIGASE"/>
    <property type="match status" value="1"/>
</dbReference>
<dbReference type="Pfam" id="PF00533">
    <property type="entry name" value="BRCT"/>
    <property type="match status" value="1"/>
</dbReference>
<dbReference type="Pfam" id="PF01653">
    <property type="entry name" value="DNA_ligase_aden"/>
    <property type="match status" value="1"/>
</dbReference>
<dbReference type="Pfam" id="PF03120">
    <property type="entry name" value="DNA_ligase_OB"/>
    <property type="match status" value="1"/>
</dbReference>
<dbReference type="Pfam" id="PF03119">
    <property type="entry name" value="DNA_ligase_ZBD"/>
    <property type="match status" value="1"/>
</dbReference>
<dbReference type="Pfam" id="PF12826">
    <property type="entry name" value="HHH_2"/>
    <property type="match status" value="1"/>
</dbReference>
<dbReference type="Pfam" id="PF14520">
    <property type="entry name" value="HHH_5"/>
    <property type="match status" value="1"/>
</dbReference>
<dbReference type="Pfam" id="PF22745">
    <property type="entry name" value="Nlig-Ia"/>
    <property type="match status" value="1"/>
</dbReference>
<dbReference type="PIRSF" id="PIRSF001604">
    <property type="entry name" value="LigA"/>
    <property type="match status" value="1"/>
</dbReference>
<dbReference type="SMART" id="SM00292">
    <property type="entry name" value="BRCT"/>
    <property type="match status" value="1"/>
</dbReference>
<dbReference type="SMART" id="SM00278">
    <property type="entry name" value="HhH1"/>
    <property type="match status" value="4"/>
</dbReference>
<dbReference type="SMART" id="SM00532">
    <property type="entry name" value="LIGANc"/>
    <property type="match status" value="1"/>
</dbReference>
<dbReference type="SUPFAM" id="SSF52113">
    <property type="entry name" value="BRCT domain"/>
    <property type="match status" value="1"/>
</dbReference>
<dbReference type="SUPFAM" id="SSF56091">
    <property type="entry name" value="DNA ligase/mRNA capping enzyme, catalytic domain"/>
    <property type="match status" value="1"/>
</dbReference>
<dbReference type="SUPFAM" id="SSF50249">
    <property type="entry name" value="Nucleic acid-binding proteins"/>
    <property type="match status" value="1"/>
</dbReference>
<dbReference type="SUPFAM" id="SSF47781">
    <property type="entry name" value="RuvA domain 2-like"/>
    <property type="match status" value="1"/>
</dbReference>
<dbReference type="PROSITE" id="PS50172">
    <property type="entry name" value="BRCT"/>
    <property type="match status" value="1"/>
</dbReference>
<dbReference type="PROSITE" id="PS01055">
    <property type="entry name" value="DNA_LIGASE_N1"/>
    <property type="match status" value="1"/>
</dbReference>
<dbReference type="PROSITE" id="PS01056">
    <property type="entry name" value="DNA_LIGASE_N2"/>
    <property type="match status" value="1"/>
</dbReference>
<name>DNLJ_FERNB</name>
<sequence length="681" mass="77873">MVSEKIKQEVEKLRKEIEYHNYRYYVLAQPVISDEEYDKLMKRLMELEEKYPELKTPDSPTQRVGGQLIEGFETVEHSEPMLSLDNTYNENEIRNFHERIRKVVRDVQYVAELKIDGVSIALRYENGLLVRAITRGDGLRGDDVTANVKTVKSIPLRLPEPLTIEVRGEIFMPVQYFEEFNRQREEEGLLPFANPRNATAGTLHLLDPSQVAQRKLDSFMYYIVKPQQYDLKTQWDALKFLEKLHFKVNPHSKLLSSIEEVIDYWKEWTEKRKKLEYWIDGVVVKVNDFEQQNELGWTAKSPRWAIAFKFPAQQVRTKVLNITFQVGRTGTITPVAEFEPVELEGSIVKRASLHNFDYIKENDIRVGDYVFIEKAGGIIPQISYVLKELRDGDEIETVPPEKCPECGGPVGKESGEYVAYKCLNPHCPAKLKRHIEVFVSRQAMDIQGLGPKIISKIVDAGLVKDIADLYYLNIFDLAQISGLGPKMISNILSEIEKSKQNPIEKLLVGLGIPGVGEKIAKVLAKKYKSMEELSKADIKELSEIEGIGEDIAKNIVEYFNSPKTKEILEKLRKAGVNLESAETTTSNILDGLTFCVTGTLENFSREEIKRFIESLGGHFTDNLTKKTDYLLVGTNPGSKLEKAKKFGVKVLNEQEFLEMLEKKGVELKESWKKPKPKDTLF</sequence>